<keyword id="KW-0067">ATP-binding</keyword>
<keyword id="KW-0414">Isoprene biosynthesis</keyword>
<keyword id="KW-0418">Kinase</keyword>
<keyword id="KW-0547">Nucleotide-binding</keyword>
<keyword id="KW-0808">Transferase</keyword>
<name>ISPE_ECOL5</name>
<sequence>MRTQWPSPAKLNLFLYITGQRADGYHTLQTLFQFLDYGDTISIELRDDGDIRLLTPVEGVEHEDNLIVRAARLLMKTAADSGRLSTGSGANISIDKRLPMGGGLGGGSSNAATVLVALNHLWQCGLSMDELAEMGLTLGADVPVFVRGHAAFAEGVGEILTPVDPPEKWYLVAHPGVSIPTPVIFKDPELPRNTPKRSIETLLKCEFSNDCEVIARKRFREVDAVLSWLLEYAPSRLTGTGACVFAEFDTESEARQVLEQAPEWLNGFVAKGVNLSPLHRAML</sequence>
<reference key="1">
    <citation type="journal article" date="2006" name="Mol. Microbiol.">
        <title>Role of pathogenicity island-associated integrases in the genome plasticity of uropathogenic Escherichia coli strain 536.</title>
        <authorList>
            <person name="Hochhut B."/>
            <person name="Wilde C."/>
            <person name="Balling G."/>
            <person name="Middendorf B."/>
            <person name="Dobrindt U."/>
            <person name="Brzuszkiewicz E."/>
            <person name="Gottschalk G."/>
            <person name="Carniel E."/>
            <person name="Hacker J."/>
        </authorList>
    </citation>
    <scope>NUCLEOTIDE SEQUENCE [LARGE SCALE GENOMIC DNA]</scope>
    <source>
        <strain>536 / UPEC</strain>
    </source>
</reference>
<evidence type="ECO:0000255" key="1">
    <source>
        <dbReference type="HAMAP-Rule" id="MF_00061"/>
    </source>
</evidence>
<dbReference type="EC" id="2.7.1.148" evidence="1"/>
<dbReference type="EMBL" id="CP000247">
    <property type="protein sequence ID" value="ABG69267.1"/>
    <property type="molecule type" value="Genomic_DNA"/>
</dbReference>
<dbReference type="RefSeq" id="WP_001260346.1">
    <property type="nucleotide sequence ID" value="NC_008253.1"/>
</dbReference>
<dbReference type="SMR" id="Q0TIG2"/>
<dbReference type="KEGG" id="ecp:ECP_1256"/>
<dbReference type="HOGENOM" id="CLU_053057_3_0_6"/>
<dbReference type="UniPathway" id="UPA00056">
    <property type="reaction ID" value="UER00094"/>
</dbReference>
<dbReference type="Proteomes" id="UP000009182">
    <property type="component" value="Chromosome"/>
</dbReference>
<dbReference type="GO" id="GO:0050515">
    <property type="term" value="F:4-(cytidine 5'-diphospho)-2-C-methyl-D-erythritol kinase activity"/>
    <property type="evidence" value="ECO:0007669"/>
    <property type="project" value="UniProtKB-UniRule"/>
</dbReference>
<dbReference type="GO" id="GO:0005524">
    <property type="term" value="F:ATP binding"/>
    <property type="evidence" value="ECO:0007669"/>
    <property type="project" value="UniProtKB-UniRule"/>
</dbReference>
<dbReference type="GO" id="GO:0019288">
    <property type="term" value="P:isopentenyl diphosphate biosynthetic process, methylerythritol 4-phosphate pathway"/>
    <property type="evidence" value="ECO:0007669"/>
    <property type="project" value="UniProtKB-UniRule"/>
</dbReference>
<dbReference type="GO" id="GO:0016114">
    <property type="term" value="P:terpenoid biosynthetic process"/>
    <property type="evidence" value="ECO:0007669"/>
    <property type="project" value="InterPro"/>
</dbReference>
<dbReference type="FunFam" id="3.30.230.10:FF:000022">
    <property type="entry name" value="4-diphosphocytidyl-2-C-methyl-D-erythritol kinase"/>
    <property type="match status" value="1"/>
</dbReference>
<dbReference type="FunFam" id="3.30.70.890:FF:000004">
    <property type="entry name" value="4-diphosphocytidyl-2-C-methyl-D-erythritol kinase"/>
    <property type="match status" value="1"/>
</dbReference>
<dbReference type="Gene3D" id="3.30.230.10">
    <property type="match status" value="1"/>
</dbReference>
<dbReference type="Gene3D" id="3.30.70.890">
    <property type="entry name" value="GHMP kinase, C-terminal domain"/>
    <property type="match status" value="1"/>
</dbReference>
<dbReference type="HAMAP" id="MF_00061">
    <property type="entry name" value="IspE"/>
    <property type="match status" value="1"/>
</dbReference>
<dbReference type="InterPro" id="IPR013750">
    <property type="entry name" value="GHMP_kinase_C_dom"/>
</dbReference>
<dbReference type="InterPro" id="IPR036554">
    <property type="entry name" value="GHMP_kinase_C_sf"/>
</dbReference>
<dbReference type="InterPro" id="IPR006204">
    <property type="entry name" value="GHMP_kinase_N_dom"/>
</dbReference>
<dbReference type="InterPro" id="IPR004424">
    <property type="entry name" value="IspE"/>
</dbReference>
<dbReference type="InterPro" id="IPR020568">
    <property type="entry name" value="Ribosomal_Su5_D2-typ_SF"/>
</dbReference>
<dbReference type="InterPro" id="IPR014721">
    <property type="entry name" value="Ribsml_uS5_D2-typ_fold_subgr"/>
</dbReference>
<dbReference type="NCBIfam" id="TIGR00154">
    <property type="entry name" value="ispE"/>
    <property type="match status" value="1"/>
</dbReference>
<dbReference type="PANTHER" id="PTHR43527">
    <property type="entry name" value="4-DIPHOSPHOCYTIDYL-2-C-METHYL-D-ERYTHRITOL KINASE, CHLOROPLASTIC"/>
    <property type="match status" value="1"/>
</dbReference>
<dbReference type="PANTHER" id="PTHR43527:SF2">
    <property type="entry name" value="4-DIPHOSPHOCYTIDYL-2-C-METHYL-D-ERYTHRITOL KINASE, CHLOROPLASTIC"/>
    <property type="match status" value="1"/>
</dbReference>
<dbReference type="Pfam" id="PF08544">
    <property type="entry name" value="GHMP_kinases_C"/>
    <property type="match status" value="1"/>
</dbReference>
<dbReference type="Pfam" id="PF00288">
    <property type="entry name" value="GHMP_kinases_N"/>
    <property type="match status" value="1"/>
</dbReference>
<dbReference type="PIRSF" id="PIRSF010376">
    <property type="entry name" value="IspE"/>
    <property type="match status" value="1"/>
</dbReference>
<dbReference type="SUPFAM" id="SSF55060">
    <property type="entry name" value="GHMP Kinase, C-terminal domain"/>
    <property type="match status" value="1"/>
</dbReference>
<dbReference type="SUPFAM" id="SSF54211">
    <property type="entry name" value="Ribosomal protein S5 domain 2-like"/>
    <property type="match status" value="1"/>
</dbReference>
<organism>
    <name type="scientific">Escherichia coli O6:K15:H31 (strain 536 / UPEC)</name>
    <dbReference type="NCBI Taxonomy" id="362663"/>
    <lineage>
        <taxon>Bacteria</taxon>
        <taxon>Pseudomonadati</taxon>
        <taxon>Pseudomonadota</taxon>
        <taxon>Gammaproteobacteria</taxon>
        <taxon>Enterobacterales</taxon>
        <taxon>Enterobacteriaceae</taxon>
        <taxon>Escherichia</taxon>
    </lineage>
</organism>
<comment type="function">
    <text evidence="1">Catalyzes the phosphorylation of the position 2 hydroxy group of 4-diphosphocytidyl-2C-methyl-D-erythritol.</text>
</comment>
<comment type="catalytic activity">
    <reaction evidence="1">
        <text>4-CDP-2-C-methyl-D-erythritol + ATP = 4-CDP-2-C-methyl-D-erythritol 2-phosphate + ADP + H(+)</text>
        <dbReference type="Rhea" id="RHEA:18437"/>
        <dbReference type="ChEBI" id="CHEBI:15378"/>
        <dbReference type="ChEBI" id="CHEBI:30616"/>
        <dbReference type="ChEBI" id="CHEBI:57823"/>
        <dbReference type="ChEBI" id="CHEBI:57919"/>
        <dbReference type="ChEBI" id="CHEBI:456216"/>
        <dbReference type="EC" id="2.7.1.148"/>
    </reaction>
</comment>
<comment type="pathway">
    <text evidence="1">Isoprenoid biosynthesis; isopentenyl diphosphate biosynthesis via DXP pathway; isopentenyl diphosphate from 1-deoxy-D-xylulose 5-phosphate: step 3/6.</text>
</comment>
<comment type="subunit">
    <text evidence="1">Homodimer.</text>
</comment>
<comment type="similarity">
    <text evidence="1">Belongs to the GHMP kinase family. IspE subfamily.</text>
</comment>
<proteinExistence type="inferred from homology"/>
<feature type="chain" id="PRO_1000007842" description="4-diphosphocytidyl-2-C-methyl-D-erythritol kinase">
    <location>
        <begin position="1"/>
        <end position="283"/>
    </location>
</feature>
<feature type="active site" evidence="1">
    <location>
        <position position="10"/>
    </location>
</feature>
<feature type="active site" evidence="1">
    <location>
        <position position="141"/>
    </location>
</feature>
<feature type="binding site" evidence="1">
    <location>
        <begin position="99"/>
        <end position="109"/>
    </location>
    <ligand>
        <name>ATP</name>
        <dbReference type="ChEBI" id="CHEBI:30616"/>
    </ligand>
</feature>
<accession>Q0TIG2</accession>
<gene>
    <name evidence="1" type="primary">ispE</name>
    <name type="ordered locus">ECP_1256</name>
</gene>
<protein>
    <recommendedName>
        <fullName evidence="1">4-diphosphocytidyl-2-C-methyl-D-erythritol kinase</fullName>
        <shortName evidence="1">CMK</shortName>
        <ecNumber evidence="1">2.7.1.148</ecNumber>
    </recommendedName>
    <alternativeName>
        <fullName evidence="1">4-(cytidine-5'-diphospho)-2-C-methyl-D-erythritol kinase</fullName>
    </alternativeName>
</protein>